<keyword id="KW-0067">ATP-binding</keyword>
<keyword id="KW-0173">Coenzyme A biosynthesis</keyword>
<keyword id="KW-0963">Cytoplasm</keyword>
<keyword id="KW-0460">Magnesium</keyword>
<keyword id="KW-0547">Nucleotide-binding</keyword>
<keyword id="KW-0548">Nucleotidyltransferase</keyword>
<keyword id="KW-1185">Reference proteome</keyword>
<keyword id="KW-0808">Transferase</keyword>
<protein>
    <recommendedName>
        <fullName evidence="1">Phosphopantetheine adenylyltransferase</fullName>
        <ecNumber evidence="1">2.7.7.3</ecNumber>
    </recommendedName>
    <alternativeName>
        <fullName evidence="1">Dephospho-CoA pyrophosphorylase</fullName>
    </alternativeName>
    <alternativeName>
        <fullName evidence="1">Pantetheine-phosphate adenylyltransferase</fullName>
        <shortName evidence="1">PPAT</shortName>
    </alternativeName>
</protein>
<gene>
    <name evidence="1" type="primary">coaD</name>
    <name type="ordered locus">Dshi_1744</name>
</gene>
<feature type="chain" id="PRO_1000076763" description="Phosphopantetheine adenylyltransferase">
    <location>
        <begin position="1"/>
        <end position="171"/>
    </location>
</feature>
<feature type="binding site" evidence="1">
    <location>
        <begin position="9"/>
        <end position="10"/>
    </location>
    <ligand>
        <name>ATP</name>
        <dbReference type="ChEBI" id="CHEBI:30616"/>
    </ligand>
</feature>
<feature type="binding site" evidence="1">
    <location>
        <position position="9"/>
    </location>
    <ligand>
        <name>substrate</name>
    </ligand>
</feature>
<feature type="binding site" evidence="1">
    <location>
        <position position="17"/>
    </location>
    <ligand>
        <name>ATP</name>
        <dbReference type="ChEBI" id="CHEBI:30616"/>
    </ligand>
</feature>
<feature type="binding site" evidence="1">
    <location>
        <position position="41"/>
    </location>
    <ligand>
        <name>substrate</name>
    </ligand>
</feature>
<feature type="binding site" evidence="1">
    <location>
        <position position="78"/>
    </location>
    <ligand>
        <name>substrate</name>
    </ligand>
</feature>
<feature type="binding site" evidence="1">
    <location>
        <position position="92"/>
    </location>
    <ligand>
        <name>substrate</name>
    </ligand>
</feature>
<feature type="binding site" evidence="1">
    <location>
        <begin position="93"/>
        <end position="95"/>
    </location>
    <ligand>
        <name>ATP</name>
        <dbReference type="ChEBI" id="CHEBI:30616"/>
    </ligand>
</feature>
<feature type="binding site" evidence="1">
    <location>
        <position position="103"/>
    </location>
    <ligand>
        <name>ATP</name>
        <dbReference type="ChEBI" id="CHEBI:30616"/>
    </ligand>
</feature>
<feature type="binding site" evidence="1">
    <location>
        <begin position="128"/>
        <end position="134"/>
    </location>
    <ligand>
        <name>ATP</name>
        <dbReference type="ChEBI" id="CHEBI:30616"/>
    </ligand>
</feature>
<feature type="site" description="Transition state stabilizer" evidence="1">
    <location>
        <position position="17"/>
    </location>
</feature>
<name>COAD_DINSH</name>
<sequence>MRIGLYPGTFDPVTLGHLDIIRRASTLVDRLVIGVAINRDKGPLFSLEERVAMLEAECAAVSAETGTEIVAHPFENLLIDCARDVGASMIIRGLRAVADFEYEFQMVGMNRRLDDSIETVFLMAEAEHQAIASKLVKEIARLGGDVTPFVTSQVRAALVDRFGPPQMNAAQ</sequence>
<proteinExistence type="inferred from homology"/>
<reference key="1">
    <citation type="journal article" date="2010" name="ISME J.">
        <title>The complete genome sequence of the algal symbiont Dinoroseobacter shibae: a hitchhiker's guide to life in the sea.</title>
        <authorList>
            <person name="Wagner-Dobler I."/>
            <person name="Ballhausen B."/>
            <person name="Berger M."/>
            <person name="Brinkhoff T."/>
            <person name="Buchholz I."/>
            <person name="Bunk B."/>
            <person name="Cypionka H."/>
            <person name="Daniel R."/>
            <person name="Drepper T."/>
            <person name="Gerdts G."/>
            <person name="Hahnke S."/>
            <person name="Han C."/>
            <person name="Jahn D."/>
            <person name="Kalhoefer D."/>
            <person name="Kiss H."/>
            <person name="Klenk H.P."/>
            <person name="Kyrpides N."/>
            <person name="Liebl W."/>
            <person name="Liesegang H."/>
            <person name="Meincke L."/>
            <person name="Pati A."/>
            <person name="Petersen J."/>
            <person name="Piekarski T."/>
            <person name="Pommerenke C."/>
            <person name="Pradella S."/>
            <person name="Pukall R."/>
            <person name="Rabus R."/>
            <person name="Stackebrandt E."/>
            <person name="Thole S."/>
            <person name="Thompson L."/>
            <person name="Tielen P."/>
            <person name="Tomasch J."/>
            <person name="von Jan M."/>
            <person name="Wanphrut N."/>
            <person name="Wichels A."/>
            <person name="Zech H."/>
            <person name="Simon M."/>
        </authorList>
    </citation>
    <scope>NUCLEOTIDE SEQUENCE [LARGE SCALE GENOMIC DNA]</scope>
    <source>
        <strain>DSM 16493 / NCIMB 14021 / DFL 12</strain>
    </source>
</reference>
<dbReference type="EC" id="2.7.7.3" evidence="1"/>
<dbReference type="EMBL" id="CP000830">
    <property type="protein sequence ID" value="ABV93486.1"/>
    <property type="molecule type" value="Genomic_DNA"/>
</dbReference>
<dbReference type="RefSeq" id="WP_012178416.1">
    <property type="nucleotide sequence ID" value="NC_009952.1"/>
</dbReference>
<dbReference type="SMR" id="A8LME1"/>
<dbReference type="STRING" id="398580.Dshi_1744"/>
<dbReference type="KEGG" id="dsh:Dshi_1744"/>
<dbReference type="eggNOG" id="COG0669">
    <property type="taxonomic scope" value="Bacteria"/>
</dbReference>
<dbReference type="HOGENOM" id="CLU_100149_0_1_5"/>
<dbReference type="OrthoDB" id="9806661at2"/>
<dbReference type="UniPathway" id="UPA00241">
    <property type="reaction ID" value="UER00355"/>
</dbReference>
<dbReference type="Proteomes" id="UP000006833">
    <property type="component" value="Chromosome"/>
</dbReference>
<dbReference type="GO" id="GO:0005737">
    <property type="term" value="C:cytoplasm"/>
    <property type="evidence" value="ECO:0007669"/>
    <property type="project" value="UniProtKB-SubCell"/>
</dbReference>
<dbReference type="GO" id="GO:0005524">
    <property type="term" value="F:ATP binding"/>
    <property type="evidence" value="ECO:0007669"/>
    <property type="project" value="UniProtKB-KW"/>
</dbReference>
<dbReference type="GO" id="GO:0004595">
    <property type="term" value="F:pantetheine-phosphate adenylyltransferase activity"/>
    <property type="evidence" value="ECO:0007669"/>
    <property type="project" value="UniProtKB-UniRule"/>
</dbReference>
<dbReference type="GO" id="GO:0015937">
    <property type="term" value="P:coenzyme A biosynthetic process"/>
    <property type="evidence" value="ECO:0007669"/>
    <property type="project" value="UniProtKB-UniRule"/>
</dbReference>
<dbReference type="CDD" id="cd02163">
    <property type="entry name" value="PPAT"/>
    <property type="match status" value="1"/>
</dbReference>
<dbReference type="Gene3D" id="3.40.50.620">
    <property type="entry name" value="HUPs"/>
    <property type="match status" value="1"/>
</dbReference>
<dbReference type="HAMAP" id="MF_00151">
    <property type="entry name" value="PPAT_bact"/>
    <property type="match status" value="1"/>
</dbReference>
<dbReference type="InterPro" id="IPR004821">
    <property type="entry name" value="Cyt_trans-like"/>
</dbReference>
<dbReference type="InterPro" id="IPR001980">
    <property type="entry name" value="PPAT"/>
</dbReference>
<dbReference type="InterPro" id="IPR014729">
    <property type="entry name" value="Rossmann-like_a/b/a_fold"/>
</dbReference>
<dbReference type="NCBIfam" id="TIGR01510">
    <property type="entry name" value="coaD_prev_kdtB"/>
    <property type="match status" value="1"/>
</dbReference>
<dbReference type="NCBIfam" id="TIGR00125">
    <property type="entry name" value="cyt_tran_rel"/>
    <property type="match status" value="1"/>
</dbReference>
<dbReference type="PANTHER" id="PTHR21342">
    <property type="entry name" value="PHOSPHOPANTETHEINE ADENYLYLTRANSFERASE"/>
    <property type="match status" value="1"/>
</dbReference>
<dbReference type="PANTHER" id="PTHR21342:SF1">
    <property type="entry name" value="PHOSPHOPANTETHEINE ADENYLYLTRANSFERASE"/>
    <property type="match status" value="1"/>
</dbReference>
<dbReference type="Pfam" id="PF01467">
    <property type="entry name" value="CTP_transf_like"/>
    <property type="match status" value="1"/>
</dbReference>
<dbReference type="PRINTS" id="PR01020">
    <property type="entry name" value="LPSBIOSNTHSS"/>
</dbReference>
<dbReference type="SUPFAM" id="SSF52374">
    <property type="entry name" value="Nucleotidylyl transferase"/>
    <property type="match status" value="1"/>
</dbReference>
<evidence type="ECO:0000255" key="1">
    <source>
        <dbReference type="HAMAP-Rule" id="MF_00151"/>
    </source>
</evidence>
<organism>
    <name type="scientific">Dinoroseobacter shibae (strain DSM 16493 / NCIMB 14021 / DFL 12)</name>
    <dbReference type="NCBI Taxonomy" id="398580"/>
    <lineage>
        <taxon>Bacteria</taxon>
        <taxon>Pseudomonadati</taxon>
        <taxon>Pseudomonadota</taxon>
        <taxon>Alphaproteobacteria</taxon>
        <taxon>Rhodobacterales</taxon>
        <taxon>Roseobacteraceae</taxon>
        <taxon>Dinoroseobacter</taxon>
    </lineage>
</organism>
<comment type="function">
    <text evidence="1">Reversibly transfers an adenylyl group from ATP to 4'-phosphopantetheine, yielding dephospho-CoA (dPCoA) and pyrophosphate.</text>
</comment>
<comment type="catalytic activity">
    <reaction evidence="1">
        <text>(R)-4'-phosphopantetheine + ATP + H(+) = 3'-dephospho-CoA + diphosphate</text>
        <dbReference type="Rhea" id="RHEA:19801"/>
        <dbReference type="ChEBI" id="CHEBI:15378"/>
        <dbReference type="ChEBI" id="CHEBI:30616"/>
        <dbReference type="ChEBI" id="CHEBI:33019"/>
        <dbReference type="ChEBI" id="CHEBI:57328"/>
        <dbReference type="ChEBI" id="CHEBI:61723"/>
        <dbReference type="EC" id="2.7.7.3"/>
    </reaction>
</comment>
<comment type="cofactor">
    <cofactor evidence="1">
        <name>Mg(2+)</name>
        <dbReference type="ChEBI" id="CHEBI:18420"/>
    </cofactor>
</comment>
<comment type="pathway">
    <text evidence="1">Cofactor biosynthesis; coenzyme A biosynthesis; CoA from (R)-pantothenate: step 4/5.</text>
</comment>
<comment type="subunit">
    <text evidence="1">Homohexamer.</text>
</comment>
<comment type="subcellular location">
    <subcellularLocation>
        <location evidence="1">Cytoplasm</location>
    </subcellularLocation>
</comment>
<comment type="similarity">
    <text evidence="1">Belongs to the bacterial CoaD family.</text>
</comment>
<accession>A8LME1</accession>